<name>RNH_SULTO</name>
<keyword id="KW-0002">3D-structure</keyword>
<keyword id="KW-0963">Cytoplasm</keyword>
<keyword id="KW-1015">Disulfide bond</keyword>
<keyword id="KW-0238">DNA-binding</keyword>
<keyword id="KW-0255">Endonuclease</keyword>
<keyword id="KW-0378">Hydrolase</keyword>
<keyword id="KW-0460">Magnesium</keyword>
<keyword id="KW-0464">Manganese</keyword>
<keyword id="KW-0479">Metal-binding</keyword>
<keyword id="KW-0540">Nuclease</keyword>
<keyword id="KW-1185">Reference proteome</keyword>
<keyword id="KW-0694">RNA-binding</keyword>
<gene>
    <name type="primary">rnhA</name>
    <name type="ordered locus">STK_07530</name>
</gene>
<reference key="1">
    <citation type="journal article" date="2001" name="DNA Res.">
        <title>Complete genome sequence of an aerobic thermoacidophilic Crenarchaeon, Sulfolobus tokodaii strain7.</title>
        <authorList>
            <person name="Kawarabayasi Y."/>
            <person name="Hino Y."/>
            <person name="Horikawa H."/>
            <person name="Jin-no K."/>
            <person name="Takahashi M."/>
            <person name="Sekine M."/>
            <person name="Baba S."/>
            <person name="Ankai A."/>
            <person name="Kosugi H."/>
            <person name="Hosoyama A."/>
            <person name="Fukui S."/>
            <person name="Nagai Y."/>
            <person name="Nishijima K."/>
            <person name="Otsuka R."/>
            <person name="Nakazawa H."/>
            <person name="Takamiya M."/>
            <person name="Kato Y."/>
            <person name="Yoshizawa T."/>
            <person name="Tanaka T."/>
            <person name="Kudoh Y."/>
            <person name="Yamazaki J."/>
            <person name="Kushida N."/>
            <person name="Oguchi A."/>
            <person name="Aoki K."/>
            <person name="Masuda S."/>
            <person name="Yanagii M."/>
            <person name="Nishimura M."/>
            <person name="Yamagishi A."/>
            <person name="Oshima T."/>
            <person name="Kikuchi H."/>
        </authorList>
    </citation>
    <scope>NUCLEOTIDE SEQUENCE [LARGE SCALE GENOMIC DNA]</scope>
    <source>
        <strain>DSM 16993 / JCM 10545 / NBRC 100140 / 7</strain>
    </source>
</reference>
<reference key="2">
    <citation type="journal article" date="2004" name="Nucleic Acids Res.">
        <title>Cleavage of double-stranded RNA by RNase HI from a thermoacidophilic archaeon, Sulfolobus tokodaii 7.</title>
        <authorList>
            <person name="Ohtani N."/>
            <person name="Yanagawa H."/>
            <person name="Tomita M."/>
            <person name="Itaya M."/>
        </authorList>
    </citation>
    <scope>FUNCTION</scope>
    <scope>CATALYTIC ACTIVITY</scope>
    <scope>COFACTOR</scope>
    <scope>SUBUNIT</scope>
    <scope>MUTAGENESIS OF ASP-7; GLU-52; ASP-76 AND ASP-125</scope>
    <source>
        <strain>DSM 16993 / JCM 10545 / NBRC 100140 / 7</strain>
    </source>
</reference>
<reference key="3">
    <citation type="journal article" date="2007" name="Biochemistry">
        <title>Crystal structure of type 1 ribonuclease H from hyperthermophilic archaeon Sulfolobus tokodaii: role of arginine 118 and C-terminal anchoring.</title>
        <authorList>
            <person name="You D.J."/>
            <person name="Chon H."/>
            <person name="Koga Y."/>
            <person name="Takano K."/>
            <person name="Kanaya S."/>
        </authorList>
    </citation>
    <scope>X-RAY CRYSTALLOGRAPHY (1.60 ANGSTROMS)</scope>
    <scope>PROTEIN STABILITY</scope>
    <scope>SUBUNIT</scope>
    <scope>DISULFIDE BOND</scope>
    <scope>NUCLEIC ACID-BINDING</scope>
    <scope>MUTAGENESIS OF CYS-58; LYS-91; ARG-118; 144-GLY--THR-149 AND CYS-145</scope>
    <source>
        <strain>DSM 16993 / JCM 10545 / NBRC 100140 / 7</strain>
    </source>
</reference>
<reference key="4">
    <citation type="journal article" date="2011" name="PLoS ONE">
        <title>Stabilization by fusion to the C-terminus of hyperthermophile Sulfolobus tokodaii RNase HI: a possibility of protein stabilization tag.</title>
        <authorList>
            <person name="Takano K."/>
            <person name="Okamoto T."/>
            <person name="Okada J."/>
            <person name="Tanaka S."/>
            <person name="Angkawidjaja C."/>
            <person name="Koga Y."/>
            <person name="Kanaya S."/>
        </authorList>
    </citation>
    <scope>X-RAY CRYSTALLOGRAPHY (1.66 ANGSTROMS) OF 1-143</scope>
    <scope>PROTEIN STABILITY</scope>
    <source>
        <strain>DSM 16993 / JCM 10545 / NBRC 100140 / 7</strain>
    </source>
</reference>
<organism>
    <name type="scientific">Sulfurisphaera tokodaii (strain DSM 16993 / JCM 10545 / NBRC 100140 / 7)</name>
    <name type="common">Sulfolobus tokodaii</name>
    <dbReference type="NCBI Taxonomy" id="273063"/>
    <lineage>
        <taxon>Archaea</taxon>
        <taxon>Thermoproteota</taxon>
        <taxon>Thermoprotei</taxon>
        <taxon>Sulfolobales</taxon>
        <taxon>Sulfolobaceae</taxon>
        <taxon>Sulfurisphaera</taxon>
    </lineage>
</organism>
<protein>
    <recommendedName>
        <fullName>Ribonuclease HI</fullName>
        <shortName>RNase HI</shortName>
        <shortName>Sto-RNase HI</shortName>
        <ecNumber>3.1.26.4</ecNumber>
    </recommendedName>
</protein>
<sequence>MIIGYFDGLCEPKNPGGIATFGFVIYLDNRKIEGYGLAEKPFSINSTNNVAEYSGLICLMETMLRLGISSPIIKGDSQLVIKQMNGEYKVKAKRIIPLYEKAIELKKKLNATLIWVPREENKEADRLSRVAYELVRRGKLRDIGCIILT</sequence>
<dbReference type="EC" id="3.1.26.4"/>
<dbReference type="EMBL" id="BA000023">
    <property type="protein sequence ID" value="BAK54376.1"/>
    <property type="molecule type" value="Genomic_DNA"/>
</dbReference>
<dbReference type="RefSeq" id="WP_010978745.1">
    <property type="nucleotide sequence ID" value="NC_003106.2"/>
</dbReference>
<dbReference type="PDB" id="2EHG">
    <property type="method" value="X-ray"/>
    <property type="resolution" value="1.60 A"/>
    <property type="chains" value="A=1-149"/>
</dbReference>
<dbReference type="PDB" id="3ALY">
    <property type="method" value="X-ray"/>
    <property type="resolution" value="1.66 A"/>
    <property type="chains" value="A/B=1-143"/>
</dbReference>
<dbReference type="PDBsum" id="2EHG"/>
<dbReference type="PDBsum" id="3ALY"/>
<dbReference type="SMR" id="F9VN79"/>
<dbReference type="STRING" id="273063.STK_07530"/>
<dbReference type="GeneID" id="1458712"/>
<dbReference type="KEGG" id="sto:STK_07530"/>
<dbReference type="PATRIC" id="fig|273063.9.peg.846"/>
<dbReference type="eggNOG" id="arCOG02942">
    <property type="taxonomic scope" value="Archaea"/>
</dbReference>
<dbReference type="OrthoDB" id="52651at2157"/>
<dbReference type="BRENDA" id="3.1.13.2">
    <property type="organism ID" value="15396"/>
</dbReference>
<dbReference type="BRENDA" id="3.1.26.4">
    <property type="organism ID" value="15396"/>
</dbReference>
<dbReference type="EvolutionaryTrace" id="F9VN79"/>
<dbReference type="Proteomes" id="UP000001015">
    <property type="component" value="Chromosome"/>
</dbReference>
<dbReference type="GO" id="GO:0005737">
    <property type="term" value="C:cytoplasm"/>
    <property type="evidence" value="ECO:0007669"/>
    <property type="project" value="UniProtKB-SubCell"/>
</dbReference>
<dbReference type="GO" id="GO:0003677">
    <property type="term" value="F:DNA binding"/>
    <property type="evidence" value="ECO:0007669"/>
    <property type="project" value="UniProtKB-KW"/>
</dbReference>
<dbReference type="GO" id="GO:0046872">
    <property type="term" value="F:metal ion binding"/>
    <property type="evidence" value="ECO:0007669"/>
    <property type="project" value="UniProtKB-KW"/>
</dbReference>
<dbReference type="GO" id="GO:0003723">
    <property type="term" value="F:RNA binding"/>
    <property type="evidence" value="ECO:0007669"/>
    <property type="project" value="UniProtKB-KW"/>
</dbReference>
<dbReference type="GO" id="GO:0004523">
    <property type="term" value="F:RNA-DNA hybrid ribonuclease activity"/>
    <property type="evidence" value="ECO:0007669"/>
    <property type="project" value="UniProtKB-EC"/>
</dbReference>
<dbReference type="CDD" id="cd09279">
    <property type="entry name" value="RNase_HI_like"/>
    <property type="match status" value="1"/>
</dbReference>
<dbReference type="Gene3D" id="3.30.420.10">
    <property type="entry name" value="Ribonuclease H-like superfamily/Ribonuclease H"/>
    <property type="match status" value="1"/>
</dbReference>
<dbReference type="InterPro" id="IPR053576">
    <property type="entry name" value="RNase_HI-like"/>
</dbReference>
<dbReference type="InterPro" id="IPR012337">
    <property type="entry name" value="RNaseH-like_sf"/>
</dbReference>
<dbReference type="InterPro" id="IPR002156">
    <property type="entry name" value="RNaseH_domain"/>
</dbReference>
<dbReference type="InterPro" id="IPR036397">
    <property type="entry name" value="RNaseH_sf"/>
</dbReference>
<dbReference type="NCBIfam" id="NF041175">
    <property type="entry name" value="RNAseHI_Thmprot"/>
    <property type="match status" value="1"/>
</dbReference>
<dbReference type="PANTHER" id="PTHR46387">
    <property type="entry name" value="POLYNUCLEOTIDYL TRANSFERASE, RIBONUCLEASE H-LIKE SUPERFAMILY PROTEIN"/>
    <property type="match status" value="1"/>
</dbReference>
<dbReference type="PANTHER" id="PTHR46387:SF2">
    <property type="entry name" value="RIBONUCLEASE HI"/>
    <property type="match status" value="1"/>
</dbReference>
<dbReference type="Pfam" id="PF13456">
    <property type="entry name" value="RVT_3"/>
    <property type="match status" value="1"/>
</dbReference>
<dbReference type="SUPFAM" id="SSF53098">
    <property type="entry name" value="Ribonuclease H-like"/>
    <property type="match status" value="1"/>
</dbReference>
<dbReference type="PROSITE" id="PS50879">
    <property type="entry name" value="RNASE_H_1"/>
    <property type="match status" value="1"/>
</dbReference>
<comment type="function">
    <text evidence="2">Nuclease that specifically degrades the RNA of RNA-DNA hybrids. Endonucleolytically removes RNA primers from the Okazaki fragments of lagging strand synthesis on its own. In the presence of Mn(2+) or Co(2+) can also cleave an RNA-RNA hybrid; the dsRNase activity is 10- 100-fold lower than RNase H activity. Complements the temperature-sensitive phenotype of an E.coli double rnhA/rnhB (RNase H) disruption mutant.</text>
</comment>
<comment type="catalytic activity">
    <reaction evidence="1 2">
        <text>Endonucleolytic cleavage to 5'-phosphomonoester.</text>
        <dbReference type="EC" id="3.1.26.4"/>
    </reaction>
</comment>
<comment type="cofactor">
    <cofactor evidence="2">
        <name>Mn(2+)</name>
        <dbReference type="ChEBI" id="CHEBI:29035"/>
    </cofactor>
    <cofactor evidence="2">
        <name>Mg(2+)</name>
        <dbReference type="ChEBI" id="CHEBI:18420"/>
    </cofactor>
    <cofactor evidence="2">
        <name>Co(2+)</name>
        <dbReference type="ChEBI" id="CHEBI:48828"/>
    </cofactor>
    <cofactor evidence="2">
        <name>Ni(2+)</name>
        <dbReference type="ChEBI" id="CHEBI:49786"/>
    </cofactor>
    <text evidence="2">Divalent metal cations; Mn(2+) and Mg(2+) are preferred over Co(2+) or Ni(2+).</text>
</comment>
<comment type="subunit">
    <text evidence="2 3">Monomer.</text>
</comment>
<comment type="subcellular location">
    <subcellularLocation>
        <location evidence="4">Cytoplasm</location>
    </subcellularLocation>
</comment>
<comment type="PTM">
    <text>The disulfide bond confers considerable stability to the protein.</text>
</comment>
<comment type="miscellaneous">
    <text>The protein is hyperthermostable, melting temperature (TM) for wild-type is 102 degrees Celsius, for the double Cys mutant is 93 degrees Celsius and for a C-terminal deletion of 6 residues is 77 degrees Celsius.</text>
</comment>
<evidence type="ECO:0000255" key="1">
    <source>
        <dbReference type="PROSITE-ProRule" id="PRU00408"/>
    </source>
</evidence>
<evidence type="ECO:0000269" key="2">
    <source>
    </source>
</evidence>
<evidence type="ECO:0000269" key="3">
    <source>
    </source>
</evidence>
<evidence type="ECO:0000305" key="4"/>
<evidence type="ECO:0007829" key="5">
    <source>
        <dbReference type="PDB" id="2EHG"/>
    </source>
</evidence>
<accession>F9VN79</accession>
<proteinExistence type="evidence at protein level"/>
<feature type="chain" id="PRO_0000420870" description="Ribonuclease HI">
    <location>
        <begin position="1"/>
        <end position="149"/>
    </location>
</feature>
<feature type="domain" description="RNase H type-1" evidence="1">
    <location>
        <begin position="1"/>
        <end position="140"/>
    </location>
</feature>
<feature type="binding site" evidence="1">
    <location>
        <position position="7"/>
    </location>
    <ligand>
        <name>Mg(2+)</name>
        <dbReference type="ChEBI" id="CHEBI:18420"/>
        <label>1</label>
    </ligand>
</feature>
<feature type="binding site" evidence="1">
    <location>
        <position position="7"/>
    </location>
    <ligand>
        <name>Mg(2+)</name>
        <dbReference type="ChEBI" id="CHEBI:18420"/>
        <label>2</label>
    </ligand>
</feature>
<feature type="binding site" evidence="1">
    <location>
        <position position="7"/>
    </location>
    <ligand>
        <name>Mn(2+)</name>
        <dbReference type="ChEBI" id="CHEBI:29035"/>
        <label>1</label>
    </ligand>
</feature>
<feature type="binding site" evidence="1">
    <location>
        <position position="7"/>
    </location>
    <ligand>
        <name>Mn(2+)</name>
        <dbReference type="ChEBI" id="CHEBI:29035"/>
        <label>2</label>
    </ligand>
</feature>
<feature type="binding site" evidence="1">
    <location>
        <position position="52"/>
    </location>
    <ligand>
        <name>Mg(2+)</name>
        <dbReference type="ChEBI" id="CHEBI:18420"/>
        <label>1</label>
    </ligand>
</feature>
<feature type="binding site" evidence="1">
    <location>
        <position position="52"/>
    </location>
    <ligand>
        <name>Mn(2+)</name>
        <dbReference type="ChEBI" id="CHEBI:29035"/>
        <label>1</label>
    </ligand>
</feature>
<feature type="binding site" evidence="1">
    <location>
        <position position="76"/>
    </location>
    <ligand>
        <name>Mg(2+)</name>
        <dbReference type="ChEBI" id="CHEBI:18420"/>
        <label>1</label>
    </ligand>
</feature>
<feature type="binding site" evidence="1">
    <location>
        <position position="76"/>
    </location>
    <ligand>
        <name>Mn(2+)</name>
        <dbReference type="ChEBI" id="CHEBI:29035"/>
        <label>1</label>
    </ligand>
</feature>
<feature type="binding site" evidence="1">
    <location>
        <position position="125"/>
    </location>
    <ligand>
        <name>Mg(2+)</name>
        <dbReference type="ChEBI" id="CHEBI:18420"/>
        <label>2</label>
    </ligand>
</feature>
<feature type="binding site" evidence="1">
    <location>
        <position position="125"/>
    </location>
    <ligand>
        <name>Mn(2+)</name>
        <dbReference type="ChEBI" id="CHEBI:29035"/>
        <label>2</label>
    </ligand>
</feature>
<feature type="disulfide bond" evidence="3">
    <location>
        <begin position="58"/>
        <end position="145"/>
    </location>
</feature>
<feature type="mutagenesis site" description="Loss of RNase H activity, loss of dsRNase activity. Does not complement E.coli double deletion mutant." evidence="2">
    <original>D</original>
    <variation>N</variation>
    <location>
        <position position="7"/>
    </location>
</feature>
<feature type="mutagenesis site" description="Loss of RNase H activity, loss of dsRNase activity. Does not complement E.coli double deletion mutant." evidence="2">
    <original>E</original>
    <variation>Q</variation>
    <location>
        <position position="52"/>
    </location>
</feature>
<feature type="mutagenesis site" description="RNase H and dsRNase activity increase slightly, decreased thermostability; when associated with A-145." evidence="3">
    <original>C</original>
    <variation>A</variation>
    <location>
        <position position="58"/>
    </location>
</feature>
<feature type="mutagenesis site" description="Loss of RNase H activity, loss of dsRNase activity. Does not complement E.coli double deletion mutant." evidence="2">
    <original>D</original>
    <variation>N</variation>
    <location>
        <position position="76"/>
    </location>
</feature>
<feature type="mutagenesis site" description="Retains RNase H activity, considerable loss of dsRNase activity." evidence="3">
    <original>K</original>
    <variation>A</variation>
    <location>
        <position position="91"/>
    </location>
</feature>
<feature type="mutagenesis site" description="10-fold reduction in both RNase H and dsRNase activity." evidence="3">
    <original>R</original>
    <variation>A</variation>
    <location>
        <position position="118"/>
    </location>
</feature>
<feature type="mutagenesis site" description="Retains RNase H activity, loss of dsRNase activity. Complements E.coli double deletion mutant." evidence="2">
    <original>D</original>
    <variation>N</variation>
    <location>
        <position position="125"/>
    </location>
</feature>
<feature type="mutagenesis site" description="20% reduction in RNase H activity, 40% reduction in dsRNase activity, partial loss of thermostability." evidence="3">
    <location>
        <begin position="144"/>
        <end position="149"/>
    </location>
</feature>
<feature type="mutagenesis site" description="RNase H and dsRNase activity increase slightly, decreased thermostability; when associated with A-58." evidence="3">
    <original>C</original>
    <variation>A</variation>
    <location>
        <position position="145"/>
    </location>
</feature>
<feature type="strand" evidence="5">
    <location>
        <begin position="3"/>
        <end position="26"/>
    </location>
</feature>
<feature type="strand" evidence="5">
    <location>
        <begin position="31"/>
        <end position="37"/>
    </location>
</feature>
<feature type="helix" evidence="5">
    <location>
        <begin position="48"/>
        <end position="66"/>
    </location>
</feature>
<feature type="strand" evidence="5">
    <location>
        <begin position="72"/>
        <end position="76"/>
    </location>
</feature>
<feature type="helix" evidence="5">
    <location>
        <begin position="78"/>
        <end position="84"/>
    </location>
</feature>
<feature type="helix" evidence="5">
    <location>
        <begin position="95"/>
        <end position="109"/>
    </location>
</feature>
<feature type="strand" evidence="5">
    <location>
        <begin position="112"/>
        <end position="115"/>
    </location>
</feature>
<feature type="helix" evidence="5">
    <location>
        <begin position="118"/>
        <end position="120"/>
    </location>
</feature>
<feature type="helix" evidence="5">
    <location>
        <begin position="122"/>
        <end position="136"/>
    </location>
</feature>
<feature type="strand" evidence="5">
    <location>
        <begin position="142"/>
        <end position="147"/>
    </location>
</feature>